<organism>
    <name type="scientific">Phaseolus vulgaris</name>
    <name type="common">Kidney bean</name>
    <name type="synonym">French bean</name>
    <dbReference type="NCBI Taxonomy" id="3885"/>
    <lineage>
        <taxon>Eukaryota</taxon>
        <taxon>Viridiplantae</taxon>
        <taxon>Streptophyta</taxon>
        <taxon>Embryophyta</taxon>
        <taxon>Tracheophyta</taxon>
        <taxon>Spermatophyta</taxon>
        <taxon>Magnoliopsida</taxon>
        <taxon>eudicotyledons</taxon>
        <taxon>Gunneridae</taxon>
        <taxon>Pentapetalae</taxon>
        <taxon>rosids</taxon>
        <taxon>fabids</taxon>
        <taxon>Fabales</taxon>
        <taxon>Fabaceae</taxon>
        <taxon>Papilionoideae</taxon>
        <taxon>50 kb inversion clade</taxon>
        <taxon>NPAAA clade</taxon>
        <taxon>indigoferoid/millettioid clade</taxon>
        <taxon>Phaseoleae</taxon>
        <taxon>Phaseolus</taxon>
    </lineage>
</organism>
<accession>P80773</accession>
<evidence type="ECO:0000269" key="1">
    <source>
    </source>
</evidence>
<evidence type="ECO:0000303" key="2">
    <source>
    </source>
</evidence>
<evidence type="ECO:0000305" key="3"/>
<comment type="subcellular location">
    <subcellularLocation>
        <location evidence="1">Secreted</location>
        <location evidence="1">Cell wall</location>
    </subcellularLocation>
</comment>
<name>CWP14_PHAVU</name>
<keyword id="KW-0134">Cell wall</keyword>
<keyword id="KW-0903">Direct protein sequencing</keyword>
<keyword id="KW-0964">Secreted</keyword>
<feature type="chain" id="PRO_0000079673" description="26 kDa cell wall protein">
    <location>
        <begin position="1"/>
        <end position="15" status="greater than"/>
    </location>
</feature>
<feature type="non-terminal residue" evidence="2">
    <location>
        <position position="15"/>
    </location>
</feature>
<dbReference type="GO" id="GO:0005576">
    <property type="term" value="C:extracellular region"/>
    <property type="evidence" value="ECO:0007669"/>
    <property type="project" value="UniProtKB-KW"/>
</dbReference>
<proteinExistence type="evidence at protein level"/>
<reference evidence="3" key="1">
    <citation type="journal article" date="1997" name="J. Biol. Chem.">
        <title>Differential extraction and protein sequencing reveals major differences in patterns of primary cell wall proteins from plants.</title>
        <authorList>
            <person name="Robertson D."/>
            <person name="Mitchell G.P."/>
            <person name="Gilroy J.S."/>
            <person name="Gerrish C."/>
            <person name="Bolwell G.P."/>
            <person name="Slabas A.R."/>
        </authorList>
    </citation>
    <scope>PROTEIN SEQUENCE</scope>
    <scope>SUBCELLULAR LOCATION</scope>
</reference>
<protein>
    <recommendedName>
        <fullName>26 kDa cell wall protein</fullName>
    </recommendedName>
</protein>
<sequence length="15" mass="1637">EYPVVFVKGLFPGKG</sequence>